<proteinExistence type="inferred from homology"/>
<comment type="function">
    <text evidence="1">DNA-dependent RNA polymerase catalyzes the transcription of DNA into RNA using the four ribonucleoside triphosphates as substrates.</text>
</comment>
<comment type="catalytic activity">
    <reaction evidence="1">
        <text>RNA(n) + a ribonucleoside 5'-triphosphate = RNA(n+1) + diphosphate</text>
        <dbReference type="Rhea" id="RHEA:21248"/>
        <dbReference type="Rhea" id="RHEA-COMP:14527"/>
        <dbReference type="Rhea" id="RHEA-COMP:17342"/>
        <dbReference type="ChEBI" id="CHEBI:33019"/>
        <dbReference type="ChEBI" id="CHEBI:61557"/>
        <dbReference type="ChEBI" id="CHEBI:140395"/>
        <dbReference type="EC" id="2.7.7.6"/>
    </reaction>
</comment>
<comment type="subunit">
    <text evidence="1">Homodimer. The RNAP catalytic core consists of 2 alpha, 1 beta, 1 beta' and 1 omega subunit. When a sigma factor is associated with the core the holoenzyme is formed, which can initiate transcription.</text>
</comment>
<comment type="domain">
    <text evidence="1">The N-terminal domain is essential for RNAP assembly and basal transcription, whereas the C-terminal domain is involved in interaction with transcriptional regulators and with upstream promoter elements.</text>
</comment>
<comment type="similarity">
    <text evidence="1">Belongs to the RNA polymerase alpha chain family.</text>
</comment>
<name>RPOA_CITK8</name>
<protein>
    <recommendedName>
        <fullName evidence="1">DNA-directed RNA polymerase subunit alpha</fullName>
        <shortName evidence="1">RNAP subunit alpha</shortName>
        <ecNumber evidence="1">2.7.7.6</ecNumber>
    </recommendedName>
    <alternativeName>
        <fullName evidence="1">RNA polymerase subunit alpha</fullName>
    </alternativeName>
    <alternativeName>
        <fullName evidence="1">Transcriptase subunit alpha</fullName>
    </alternativeName>
</protein>
<evidence type="ECO:0000255" key="1">
    <source>
        <dbReference type="HAMAP-Rule" id="MF_00059"/>
    </source>
</evidence>
<gene>
    <name evidence="1" type="primary">rpoA</name>
    <name type="ordered locus">CKO_04708</name>
</gene>
<organism>
    <name type="scientific">Citrobacter koseri (strain ATCC BAA-895 / CDC 4225-83 / SGSC4696)</name>
    <dbReference type="NCBI Taxonomy" id="290338"/>
    <lineage>
        <taxon>Bacteria</taxon>
        <taxon>Pseudomonadati</taxon>
        <taxon>Pseudomonadota</taxon>
        <taxon>Gammaproteobacteria</taxon>
        <taxon>Enterobacterales</taxon>
        <taxon>Enterobacteriaceae</taxon>
        <taxon>Citrobacter</taxon>
    </lineage>
</organism>
<accession>A8AQJ0</accession>
<dbReference type="EC" id="2.7.7.6" evidence="1"/>
<dbReference type="EMBL" id="CP000822">
    <property type="protein sequence ID" value="ABV15753.1"/>
    <property type="molecule type" value="Genomic_DNA"/>
</dbReference>
<dbReference type="RefSeq" id="WP_001162094.1">
    <property type="nucleotide sequence ID" value="NC_009792.1"/>
</dbReference>
<dbReference type="SMR" id="A8AQJ0"/>
<dbReference type="STRING" id="290338.CKO_04708"/>
<dbReference type="GeneID" id="93778692"/>
<dbReference type="KEGG" id="cko:CKO_04708"/>
<dbReference type="HOGENOM" id="CLU_053084_0_0_6"/>
<dbReference type="OrthoDB" id="9805706at2"/>
<dbReference type="Proteomes" id="UP000008148">
    <property type="component" value="Chromosome"/>
</dbReference>
<dbReference type="GO" id="GO:0005737">
    <property type="term" value="C:cytoplasm"/>
    <property type="evidence" value="ECO:0007669"/>
    <property type="project" value="UniProtKB-ARBA"/>
</dbReference>
<dbReference type="GO" id="GO:0000428">
    <property type="term" value="C:DNA-directed RNA polymerase complex"/>
    <property type="evidence" value="ECO:0007669"/>
    <property type="project" value="UniProtKB-KW"/>
</dbReference>
<dbReference type="GO" id="GO:0003677">
    <property type="term" value="F:DNA binding"/>
    <property type="evidence" value="ECO:0007669"/>
    <property type="project" value="UniProtKB-UniRule"/>
</dbReference>
<dbReference type="GO" id="GO:0003899">
    <property type="term" value="F:DNA-directed RNA polymerase activity"/>
    <property type="evidence" value="ECO:0007669"/>
    <property type="project" value="UniProtKB-UniRule"/>
</dbReference>
<dbReference type="GO" id="GO:0046983">
    <property type="term" value="F:protein dimerization activity"/>
    <property type="evidence" value="ECO:0007669"/>
    <property type="project" value="InterPro"/>
</dbReference>
<dbReference type="GO" id="GO:0006351">
    <property type="term" value="P:DNA-templated transcription"/>
    <property type="evidence" value="ECO:0007669"/>
    <property type="project" value="UniProtKB-UniRule"/>
</dbReference>
<dbReference type="CDD" id="cd06928">
    <property type="entry name" value="RNAP_alpha_NTD"/>
    <property type="match status" value="1"/>
</dbReference>
<dbReference type="FunFam" id="1.10.150.20:FF:000001">
    <property type="entry name" value="DNA-directed RNA polymerase subunit alpha"/>
    <property type="match status" value="1"/>
</dbReference>
<dbReference type="FunFam" id="2.170.120.12:FF:000001">
    <property type="entry name" value="DNA-directed RNA polymerase subunit alpha"/>
    <property type="match status" value="1"/>
</dbReference>
<dbReference type="Gene3D" id="1.10.150.20">
    <property type="entry name" value="5' to 3' exonuclease, C-terminal subdomain"/>
    <property type="match status" value="1"/>
</dbReference>
<dbReference type="Gene3D" id="2.170.120.12">
    <property type="entry name" value="DNA-directed RNA polymerase, insert domain"/>
    <property type="match status" value="1"/>
</dbReference>
<dbReference type="Gene3D" id="3.30.1360.10">
    <property type="entry name" value="RNA polymerase, RBP11-like subunit"/>
    <property type="match status" value="1"/>
</dbReference>
<dbReference type="HAMAP" id="MF_00059">
    <property type="entry name" value="RNApol_bact_RpoA"/>
    <property type="match status" value="1"/>
</dbReference>
<dbReference type="InterPro" id="IPR011262">
    <property type="entry name" value="DNA-dir_RNA_pol_insert"/>
</dbReference>
<dbReference type="InterPro" id="IPR011263">
    <property type="entry name" value="DNA-dir_RNA_pol_RpoA/D/Rpb3"/>
</dbReference>
<dbReference type="InterPro" id="IPR011773">
    <property type="entry name" value="DNA-dir_RpoA"/>
</dbReference>
<dbReference type="InterPro" id="IPR036603">
    <property type="entry name" value="RBP11-like"/>
</dbReference>
<dbReference type="InterPro" id="IPR011260">
    <property type="entry name" value="RNAP_asu_C"/>
</dbReference>
<dbReference type="InterPro" id="IPR036643">
    <property type="entry name" value="RNApol_insert_sf"/>
</dbReference>
<dbReference type="NCBIfam" id="NF003513">
    <property type="entry name" value="PRK05182.1-2"/>
    <property type="match status" value="1"/>
</dbReference>
<dbReference type="NCBIfam" id="NF003519">
    <property type="entry name" value="PRK05182.2-5"/>
    <property type="match status" value="1"/>
</dbReference>
<dbReference type="NCBIfam" id="TIGR02027">
    <property type="entry name" value="rpoA"/>
    <property type="match status" value="1"/>
</dbReference>
<dbReference type="Pfam" id="PF01000">
    <property type="entry name" value="RNA_pol_A_bac"/>
    <property type="match status" value="1"/>
</dbReference>
<dbReference type="Pfam" id="PF03118">
    <property type="entry name" value="RNA_pol_A_CTD"/>
    <property type="match status" value="1"/>
</dbReference>
<dbReference type="Pfam" id="PF01193">
    <property type="entry name" value="RNA_pol_L"/>
    <property type="match status" value="1"/>
</dbReference>
<dbReference type="SMART" id="SM00662">
    <property type="entry name" value="RPOLD"/>
    <property type="match status" value="1"/>
</dbReference>
<dbReference type="SUPFAM" id="SSF47789">
    <property type="entry name" value="C-terminal domain of RNA polymerase alpha subunit"/>
    <property type="match status" value="1"/>
</dbReference>
<dbReference type="SUPFAM" id="SSF56553">
    <property type="entry name" value="Insert subdomain of RNA polymerase alpha subunit"/>
    <property type="match status" value="1"/>
</dbReference>
<dbReference type="SUPFAM" id="SSF55257">
    <property type="entry name" value="RBP11-like subunits of RNA polymerase"/>
    <property type="match status" value="1"/>
</dbReference>
<feature type="chain" id="PRO_0000323626" description="DNA-directed RNA polymerase subunit alpha">
    <location>
        <begin position="1"/>
        <end position="329"/>
    </location>
</feature>
<feature type="region of interest" description="Alpha N-terminal domain (alpha-NTD)" evidence="1">
    <location>
        <begin position="1"/>
        <end position="235"/>
    </location>
</feature>
<feature type="region of interest" description="Alpha C-terminal domain (alpha-CTD)" evidence="1">
    <location>
        <begin position="249"/>
        <end position="329"/>
    </location>
</feature>
<reference key="1">
    <citation type="submission" date="2007-08" db="EMBL/GenBank/DDBJ databases">
        <authorList>
            <consortium name="The Citrobacter koseri Genome Sequencing Project"/>
            <person name="McClelland M."/>
            <person name="Sanderson E.K."/>
            <person name="Porwollik S."/>
            <person name="Spieth J."/>
            <person name="Clifton W.S."/>
            <person name="Latreille P."/>
            <person name="Courtney L."/>
            <person name="Wang C."/>
            <person name="Pepin K."/>
            <person name="Bhonagiri V."/>
            <person name="Nash W."/>
            <person name="Johnson M."/>
            <person name="Thiruvilangam P."/>
            <person name="Wilson R."/>
        </authorList>
    </citation>
    <scope>NUCLEOTIDE SEQUENCE [LARGE SCALE GENOMIC DNA]</scope>
    <source>
        <strain>ATCC BAA-895 / CDC 4225-83 / SGSC4696</strain>
    </source>
</reference>
<sequence>MQGSVTEFLKPRLVDIEQVSSTHAKVTLEPLERGFGHTLGNALRRILLSSMPGCAVTEVEIDGVLHEYSTKEGVQEDILEILLNLKGLAVRVQGKDEVILTLNKSGIGPVTAADITHDGDVEIVKPQHVICHLTDENASISMRIKVQRGRGYVPASTRIHSEEDERPIGRLLVDACYSPVERIAYNVEAARVEQRTDLDKLVIEMETNGTIDPEEAIRRAATILAEQLEAFVDLRDVRQPEVKEEKPEFDPILLRPVDDLELTVRSANCLKAEAIHYIGDLVQRTEVELLKTPNLGKKSLTEIKDVLASRGLSLGMRLENWPPASIADE</sequence>
<keyword id="KW-0240">DNA-directed RNA polymerase</keyword>
<keyword id="KW-0548">Nucleotidyltransferase</keyword>
<keyword id="KW-1185">Reference proteome</keyword>
<keyword id="KW-0804">Transcription</keyword>
<keyword id="KW-0808">Transferase</keyword>